<name>MPTD_METKA</name>
<comment type="function">
    <text evidence="1">Catalyzes the conversion of 7,8-dihydroneopterin (H2Neo) to 6-hydroxymethyl-7,8-dihydropterin (6-HMD).</text>
</comment>
<comment type="catalytic activity">
    <reaction evidence="1">
        <text>7,8-dihydroneopterin = 6-hydroxymethyl-7,8-dihydropterin + glycolaldehyde</text>
        <dbReference type="Rhea" id="RHEA:10540"/>
        <dbReference type="ChEBI" id="CHEBI:17001"/>
        <dbReference type="ChEBI" id="CHEBI:17071"/>
        <dbReference type="ChEBI" id="CHEBI:44841"/>
        <dbReference type="EC" id="4.1.2.25"/>
    </reaction>
</comment>
<comment type="pathway">
    <text evidence="1">Cofactor biosynthesis; 5,6,7,8-tetrahydromethanopterin biosynthesis.</text>
</comment>
<comment type="subunit">
    <text evidence="1 2">Homotetramer.</text>
</comment>
<comment type="similarity">
    <text evidence="1">Belongs to the archaeal dihydroneopterin aldolase family.</text>
</comment>
<gene>
    <name evidence="1" type="primary">mptD</name>
    <name type="ordered locus">MK0786</name>
</gene>
<proteinExistence type="evidence at protein level"/>
<reference key="1">
    <citation type="journal article" date="2002" name="Proc. Natl. Acad. Sci. U.S.A.">
        <title>The complete genome of hyperthermophile Methanopyrus kandleri AV19 and monophyly of archaeal methanogens.</title>
        <authorList>
            <person name="Slesarev A.I."/>
            <person name="Mezhevaya K.V."/>
            <person name="Makarova K.S."/>
            <person name="Polushin N.N."/>
            <person name="Shcherbinina O.V."/>
            <person name="Shakhova V.V."/>
            <person name="Belova G.I."/>
            <person name="Aravind L."/>
            <person name="Natale D.A."/>
            <person name="Rogozin I.B."/>
            <person name="Tatusov R.L."/>
            <person name="Wolf Y.I."/>
            <person name="Stetter K.O."/>
            <person name="Malykh A.G."/>
            <person name="Koonin E.V."/>
            <person name="Kozyavkin S.A."/>
        </authorList>
    </citation>
    <scope>NUCLEOTIDE SEQUENCE [LARGE SCALE GENOMIC DNA]</scope>
    <source>
        <strain>AV19 / DSM 6324 / JCM 9639 / NBRC 100938</strain>
    </source>
</reference>
<reference key="2">
    <citation type="submission" date="2009-02" db="PDB data bank">
        <title>Crystal Structure of uncharacterized conserved archaeal protein from Methanopyrus kandleri.</title>
        <authorList>
            <consortium name="New York structural genomix research consortium (NYSGXRC)"/>
        </authorList>
    </citation>
    <scope>X-RAY CRYSTALLOGRAPHY (2.33 ANGSTROMS) OF 2-121</scope>
    <scope>SUBUNIT</scope>
</reference>
<organism>
    <name type="scientific">Methanopyrus kandleri (strain AV19 / DSM 6324 / JCM 9639 / NBRC 100938)</name>
    <dbReference type="NCBI Taxonomy" id="190192"/>
    <lineage>
        <taxon>Archaea</taxon>
        <taxon>Methanobacteriati</taxon>
        <taxon>Methanobacteriota</taxon>
        <taxon>Methanomada group</taxon>
        <taxon>Methanopyri</taxon>
        <taxon>Methanopyrales</taxon>
        <taxon>Methanopyraceae</taxon>
        <taxon>Methanopyrus</taxon>
    </lineage>
</organism>
<keyword id="KW-0002">3D-structure</keyword>
<keyword id="KW-0456">Lyase</keyword>
<keyword id="KW-1185">Reference proteome</keyword>
<dbReference type="EC" id="4.1.2.25" evidence="1"/>
<dbReference type="EMBL" id="AE009439">
    <property type="protein sequence ID" value="AAM02000.1"/>
    <property type="molecule type" value="Genomic_DNA"/>
</dbReference>
<dbReference type="RefSeq" id="WP_011019155.1">
    <property type="nucleotide sequence ID" value="NC_003551.1"/>
</dbReference>
<dbReference type="PDB" id="2IEC">
    <property type="method" value="X-ray"/>
    <property type="resolution" value="2.33 A"/>
    <property type="chains" value="A/B/C/D=2-121"/>
</dbReference>
<dbReference type="PDBsum" id="2IEC"/>
<dbReference type="SMR" id="Q8TX89"/>
<dbReference type="FunCoup" id="Q8TX89">
    <property type="interactions" value="4"/>
</dbReference>
<dbReference type="STRING" id="190192.MK0786"/>
<dbReference type="PaxDb" id="190192-MK0786"/>
<dbReference type="DNASU" id="1476887"/>
<dbReference type="EnsemblBacteria" id="AAM02000">
    <property type="protein sequence ID" value="AAM02000"/>
    <property type="gene ID" value="MK0786"/>
</dbReference>
<dbReference type="GeneID" id="1476887"/>
<dbReference type="KEGG" id="mka:MK0786"/>
<dbReference type="PATRIC" id="fig|190192.8.peg.828"/>
<dbReference type="HOGENOM" id="CLU_149105_1_0_2"/>
<dbReference type="InParanoid" id="Q8TX89"/>
<dbReference type="UniPathway" id="UPA00065"/>
<dbReference type="EvolutionaryTrace" id="Q8TX89"/>
<dbReference type="Proteomes" id="UP000001826">
    <property type="component" value="Chromosome"/>
</dbReference>
<dbReference type="GO" id="GO:0004150">
    <property type="term" value="F:dihydroneopterin aldolase activity"/>
    <property type="evidence" value="ECO:0007669"/>
    <property type="project" value="UniProtKB-UniRule"/>
</dbReference>
<dbReference type="GO" id="GO:2001118">
    <property type="term" value="P:tetrahydromethanopterin biosynthetic process"/>
    <property type="evidence" value="ECO:0007669"/>
    <property type="project" value="UniProtKB-UniRule"/>
</dbReference>
<dbReference type="Gene3D" id="3.30.1300.20">
    <property type="entry name" value="7,8-dihydroneopterin aldolase (MptD)"/>
    <property type="match status" value="1"/>
</dbReference>
<dbReference type="HAMAP" id="MF_02130">
    <property type="entry name" value="DHNA_arch"/>
    <property type="match status" value="1"/>
</dbReference>
<dbReference type="InterPro" id="IPR027508">
    <property type="entry name" value="DHN_aldolase_MptD"/>
</dbReference>
<dbReference type="InterPro" id="IPR036839">
    <property type="entry name" value="MptD_sf"/>
</dbReference>
<dbReference type="InterPro" id="IPR007181">
    <property type="entry name" value="MtpD_C"/>
</dbReference>
<dbReference type="Pfam" id="PF04038">
    <property type="entry name" value="DHNA"/>
    <property type="match status" value="1"/>
</dbReference>
<dbReference type="SUPFAM" id="SSF143560">
    <property type="entry name" value="MK0786-like"/>
    <property type="match status" value="1"/>
</dbReference>
<sequence length="121" mass="13735">MKYFKRLSDRERAIFEAGITLGAIYHQFCGTPVSPGTAEEVAKCIERAALLQPCVIDARVEVDVSSEDTDNYGGYTEVSGRNLRVTIVTRCGEWEAVGKLEFIEELNYPLMWVEEIRRVEQ</sequence>
<feature type="chain" id="PRO_0000420353" description="Dihydroneopterin aldolase">
    <location>
        <begin position="1"/>
        <end position="121"/>
    </location>
</feature>
<feature type="binding site" evidence="1">
    <location>
        <position position="16"/>
    </location>
    <ligand>
        <name>substrate</name>
    </ligand>
</feature>
<feature type="binding site" evidence="1">
    <location>
        <position position="111"/>
    </location>
    <ligand>
        <name>substrate</name>
    </ligand>
</feature>
<feature type="helix" evidence="3">
    <location>
        <begin position="9"/>
        <end position="28"/>
    </location>
</feature>
<feature type="helix" evidence="3">
    <location>
        <begin position="35"/>
        <end position="37"/>
    </location>
</feature>
<feature type="helix" evidence="3">
    <location>
        <begin position="38"/>
        <end position="49"/>
    </location>
</feature>
<feature type="strand" evidence="3">
    <location>
        <begin position="55"/>
        <end position="62"/>
    </location>
</feature>
<feature type="helix" evidence="3">
    <location>
        <begin position="66"/>
        <end position="69"/>
    </location>
</feature>
<feature type="turn" evidence="3">
    <location>
        <begin position="80"/>
        <end position="82"/>
    </location>
</feature>
<feature type="strand" evidence="3">
    <location>
        <begin position="83"/>
        <end position="91"/>
    </location>
</feature>
<feature type="strand" evidence="3">
    <location>
        <begin position="94"/>
        <end position="103"/>
    </location>
</feature>
<feature type="turn" evidence="3">
    <location>
        <begin position="104"/>
        <end position="107"/>
    </location>
</feature>
<feature type="strand" evidence="3">
    <location>
        <begin position="108"/>
        <end position="118"/>
    </location>
</feature>
<protein>
    <recommendedName>
        <fullName evidence="1">Dihydroneopterin aldolase</fullName>
        <shortName evidence="1">DHNA</shortName>
        <ecNumber evidence="1">4.1.2.25</ecNumber>
    </recommendedName>
    <alternativeName>
        <fullName evidence="1">7,8-dihydroneopterin aldolase</fullName>
    </alternativeName>
</protein>
<evidence type="ECO:0000255" key="1">
    <source>
        <dbReference type="HAMAP-Rule" id="MF_02130"/>
    </source>
</evidence>
<evidence type="ECO:0000269" key="2">
    <source ref="2"/>
</evidence>
<evidence type="ECO:0007829" key="3">
    <source>
        <dbReference type="PDB" id="2IEC"/>
    </source>
</evidence>
<accession>Q8TX89</accession>